<organism>
    <name type="scientific">Pan paniscus</name>
    <name type="common">Pygmy chimpanzee</name>
    <name type="synonym">Bonobo</name>
    <dbReference type="NCBI Taxonomy" id="9597"/>
    <lineage>
        <taxon>Eukaryota</taxon>
        <taxon>Metazoa</taxon>
        <taxon>Chordata</taxon>
        <taxon>Craniata</taxon>
        <taxon>Vertebrata</taxon>
        <taxon>Euteleostomi</taxon>
        <taxon>Mammalia</taxon>
        <taxon>Eutheria</taxon>
        <taxon>Euarchontoglires</taxon>
        <taxon>Primates</taxon>
        <taxon>Haplorrhini</taxon>
        <taxon>Catarrhini</taxon>
        <taxon>Hominidae</taxon>
        <taxon>Pan</taxon>
    </lineage>
</organism>
<protein>
    <recommendedName>
        <fullName>Homeobox protein Hox-A7</fullName>
    </recommendedName>
</protein>
<name>HXA7_PANPA</name>
<keyword id="KW-0217">Developmental protein</keyword>
<keyword id="KW-0238">DNA-binding</keyword>
<keyword id="KW-0371">Homeobox</keyword>
<keyword id="KW-0539">Nucleus</keyword>
<keyword id="KW-1185">Reference proteome</keyword>
<keyword id="KW-0804">Transcription</keyword>
<keyword id="KW-0805">Transcription regulation</keyword>
<dbReference type="EMBL" id="DQ977296">
    <property type="protein sequence ID" value="ABM54432.1"/>
    <property type="molecule type" value="Genomic_DNA"/>
</dbReference>
<dbReference type="STRING" id="9597.ENSPPAP00000022325"/>
<dbReference type="eggNOG" id="KOG0489">
    <property type="taxonomic scope" value="Eukaryota"/>
</dbReference>
<dbReference type="Proteomes" id="UP000240080">
    <property type="component" value="Unplaced"/>
</dbReference>
<dbReference type="GO" id="GO:0005634">
    <property type="term" value="C:nucleus"/>
    <property type="evidence" value="ECO:0007669"/>
    <property type="project" value="UniProtKB-SubCell"/>
</dbReference>
<dbReference type="GO" id="GO:0000981">
    <property type="term" value="F:DNA-binding transcription factor activity, RNA polymerase II-specific"/>
    <property type="evidence" value="ECO:0007669"/>
    <property type="project" value="TreeGrafter"/>
</dbReference>
<dbReference type="GO" id="GO:0000978">
    <property type="term" value="F:RNA polymerase II cis-regulatory region sequence-specific DNA binding"/>
    <property type="evidence" value="ECO:0007669"/>
    <property type="project" value="TreeGrafter"/>
</dbReference>
<dbReference type="GO" id="GO:0009952">
    <property type="term" value="P:anterior/posterior pattern specification"/>
    <property type="evidence" value="ECO:0007669"/>
    <property type="project" value="TreeGrafter"/>
</dbReference>
<dbReference type="CDD" id="cd00086">
    <property type="entry name" value="homeodomain"/>
    <property type="match status" value="1"/>
</dbReference>
<dbReference type="FunFam" id="1.10.10.60:FF:000017">
    <property type="entry name" value="Homeobox protein antennapedia"/>
    <property type="match status" value="1"/>
</dbReference>
<dbReference type="Gene3D" id="1.10.10.60">
    <property type="entry name" value="Homeodomain-like"/>
    <property type="match status" value="1"/>
</dbReference>
<dbReference type="InterPro" id="IPR050296">
    <property type="entry name" value="Antp_homeobox"/>
</dbReference>
<dbReference type="InterPro" id="IPR001356">
    <property type="entry name" value="HD"/>
</dbReference>
<dbReference type="InterPro" id="IPR020479">
    <property type="entry name" value="HD_metazoa"/>
</dbReference>
<dbReference type="InterPro" id="IPR017995">
    <property type="entry name" value="Homeobox_antennapedia"/>
</dbReference>
<dbReference type="InterPro" id="IPR001827">
    <property type="entry name" value="Homeobox_Antennapedia_CS"/>
</dbReference>
<dbReference type="InterPro" id="IPR009057">
    <property type="entry name" value="Homeodomain-like_sf"/>
</dbReference>
<dbReference type="PANTHER" id="PTHR45659">
    <property type="entry name" value="HOMEOBOX PROTEIN HOX"/>
    <property type="match status" value="1"/>
</dbReference>
<dbReference type="PANTHER" id="PTHR45659:SF12">
    <property type="entry name" value="HOMEOBOX PROTEIN HOX-A7"/>
    <property type="match status" value="1"/>
</dbReference>
<dbReference type="Pfam" id="PF00046">
    <property type="entry name" value="Homeodomain"/>
    <property type="match status" value="1"/>
</dbReference>
<dbReference type="PRINTS" id="PR00025">
    <property type="entry name" value="ANTENNAPEDIA"/>
</dbReference>
<dbReference type="PRINTS" id="PR00024">
    <property type="entry name" value="HOMEOBOX"/>
</dbReference>
<dbReference type="SMART" id="SM00389">
    <property type="entry name" value="HOX"/>
    <property type="match status" value="1"/>
</dbReference>
<dbReference type="SUPFAM" id="SSF46689">
    <property type="entry name" value="Homeodomain-like"/>
    <property type="match status" value="1"/>
</dbReference>
<dbReference type="PROSITE" id="PS00032">
    <property type="entry name" value="ANTENNAPEDIA"/>
    <property type="match status" value="1"/>
</dbReference>
<dbReference type="PROSITE" id="PS50071">
    <property type="entry name" value="HOMEOBOX_2"/>
    <property type="match status" value="1"/>
</dbReference>
<feature type="chain" id="PRO_0000285420" description="Homeobox protein Hox-A7">
    <location>
        <begin position="1"/>
        <end position="230"/>
    </location>
</feature>
<feature type="DNA-binding region" description="Homeobox" evidence="2">
    <location>
        <begin position="130"/>
        <end position="189"/>
    </location>
</feature>
<feature type="region of interest" description="Disordered" evidence="3">
    <location>
        <begin position="185"/>
        <end position="230"/>
    </location>
</feature>
<feature type="short sequence motif" description="Antp-type hexapeptide">
    <location>
        <begin position="119"/>
        <end position="124"/>
    </location>
</feature>
<feature type="compositionally biased region" description="Low complexity" evidence="3">
    <location>
        <begin position="194"/>
        <end position="213"/>
    </location>
</feature>
<feature type="compositionally biased region" description="Acidic residues" evidence="3">
    <location>
        <begin position="216"/>
        <end position="230"/>
    </location>
</feature>
<proteinExistence type="inferred from homology"/>
<gene>
    <name type="primary">HOXA7</name>
</gene>
<evidence type="ECO:0000250" key="1"/>
<evidence type="ECO:0000255" key="2">
    <source>
        <dbReference type="PROSITE-ProRule" id="PRU00108"/>
    </source>
</evidence>
<evidence type="ECO:0000256" key="3">
    <source>
        <dbReference type="SAM" id="MobiDB-lite"/>
    </source>
</evidence>
<evidence type="ECO:0000305" key="4"/>
<reference key="1">
    <citation type="submission" date="2006-08" db="EMBL/GenBank/DDBJ databases">
        <title>Positive selection in transcription factor genes on the human lineage.</title>
        <authorList>
            <person name="Nickel G.C."/>
            <person name="Tefft D.L."/>
            <person name="Trevarthen K."/>
            <person name="Funt J."/>
            <person name="Adams M.D."/>
        </authorList>
    </citation>
    <scope>NUCLEOTIDE SEQUENCE [GENOMIC DNA]</scope>
</reference>
<accession>A1YGK7</accession>
<sequence>MSSSYYVNALFSKYTAGASLFQNAEPTSCSFAPNSQRSGYGAGAGAFASTVPGLYNVNSPLYQSPFASGYGLGADAYGNLPCASYDQNIPGLCSDLAKGACDKADEGALHGAAEANFRIYPWMRSSGPDRKRGRQTYTRYQTLELEKEFHFNRYLTRRRRIEXXHALCLTERQIXXWFQNRRMKWKKEHKDDGPTAAAAPEGAVPSAAATAAADKADEEDDDEQEEDEEE</sequence>
<comment type="function">
    <text evidence="1">Sequence-specific transcription factor which is part of a developmental regulatory system that provides cells with specific positional identities on the anterior-posterior axis.</text>
</comment>
<comment type="subcellular location">
    <subcellularLocation>
        <location evidence="2">Nucleus</location>
    </subcellularLocation>
</comment>
<comment type="similarity">
    <text evidence="4">Belongs to the Antp homeobox family.</text>
</comment>